<accession>I3SPW2</accession>
<keyword id="KW-0349">Heme</keyword>
<keyword id="KW-0408">Iron</keyword>
<keyword id="KW-0479">Metal-binding</keyword>
<keyword id="KW-0536">Nodulation</keyword>
<keyword id="KW-0560">Oxidoreductase</keyword>
<keyword id="KW-0561">Oxygen transport</keyword>
<keyword id="KW-1185">Reference proteome</keyword>
<keyword id="KW-0813">Transport</keyword>
<evidence type="ECO:0000250" key="1">
    <source>
        <dbReference type="UniProtKB" id="O04986"/>
    </source>
</evidence>
<evidence type="ECO:0000250" key="2">
    <source>
        <dbReference type="UniProtKB" id="P68168"/>
    </source>
</evidence>
<evidence type="ECO:0000250" key="3">
    <source>
        <dbReference type="UniProtKB" id="Q3C1F4"/>
    </source>
</evidence>
<evidence type="ECO:0000250" key="4">
    <source>
        <dbReference type="UniProtKB" id="Q42831"/>
    </source>
</evidence>
<evidence type="ECO:0000255" key="5">
    <source>
        <dbReference type="PROSITE-ProRule" id="PRU00238"/>
    </source>
</evidence>
<evidence type="ECO:0000269" key="6">
    <source>
    </source>
</evidence>
<evidence type="ECO:0000303" key="7">
    <source>
    </source>
</evidence>
<evidence type="ECO:0000305" key="8"/>
<evidence type="ECO:0000312" key="9">
    <source>
        <dbReference type="EMBL" id="KEH30375.1"/>
    </source>
</evidence>
<evidence type="ECO:0000312" key="10">
    <source>
        <dbReference type="EMBL" id="RHN61224.1"/>
    </source>
</evidence>
<feature type="chain" id="PRO_0000460309" description="Anaerobic nitrite reductase Glb1-1">
    <location>
        <begin position="1"/>
        <end position="160"/>
    </location>
</feature>
<feature type="domain" description="Globin" evidence="5">
    <location>
        <begin position="8"/>
        <end position="157"/>
    </location>
</feature>
<feature type="short sequence motif" description="Homodimerization" evidence="1">
    <location>
        <begin position="41"/>
        <end position="45"/>
    </location>
</feature>
<feature type="short sequence motif" description="Homodimerization" evidence="1">
    <location>
        <begin position="111"/>
        <end position="123"/>
    </location>
</feature>
<feature type="binding site" evidence="2">
    <location>
        <position position="51"/>
    </location>
    <ligand>
        <name>heme b</name>
        <dbReference type="ChEBI" id="CHEBI:60344"/>
    </ligand>
</feature>
<feature type="binding site" evidence="1">
    <location>
        <position position="65"/>
    </location>
    <ligand>
        <name>heme b</name>
        <dbReference type="ChEBI" id="CHEBI:60344"/>
    </ligand>
</feature>
<feature type="binding site" description="distal binding residue" evidence="5">
    <location>
        <position position="69"/>
    </location>
    <ligand>
        <name>heme b</name>
        <dbReference type="ChEBI" id="CHEBI:60344"/>
    </ligand>
    <ligandPart>
        <name>Fe</name>
        <dbReference type="ChEBI" id="CHEBI:18248"/>
    </ligandPart>
</feature>
<feature type="binding site" evidence="1">
    <location>
        <position position="99"/>
    </location>
    <ligand>
        <name>heme b</name>
        <dbReference type="ChEBI" id="CHEBI:60344"/>
    </ligand>
</feature>
<feature type="binding site" description="proximal binding residue" evidence="5">
    <location>
        <position position="104"/>
    </location>
    <ligand>
        <name>heme b</name>
        <dbReference type="ChEBI" id="CHEBI:60344"/>
    </ligand>
    <ligandPart>
        <name>Fe</name>
        <dbReference type="ChEBI" id="CHEBI:18248"/>
    </ligandPart>
</feature>
<feature type="site" description="Homodimerization" evidence="1">
    <location>
        <position position="138"/>
    </location>
</feature>
<gene>
    <name evidence="7" type="primary">Glb1-1</name>
    <name evidence="9" type="ordered locus">MTR_4g068860</name>
    <name evidence="7" type="ordered locus">Medtr4g068860</name>
    <name evidence="10" type="ORF">MtrunA17_Chr4g0034301</name>
</gene>
<name>GLB11_MEDTR</name>
<protein>
    <recommendedName>
        <fullName evidence="1">Anaerobic nitrite reductase Glb1-1</fullName>
        <ecNumber evidence="1">1.7.2.-</ecNumber>
    </recommendedName>
    <alternativeName>
        <fullName evidence="7">Non-symbiotic hemoglobin 1-1</fullName>
        <shortName evidence="7">MtGlb1-1</shortName>
    </alternativeName>
    <alternativeName>
        <fullName evidence="7">Phytoglobin 1.1</fullName>
        <shortName evidence="7">Phytogb1.1</shortName>
    </alternativeName>
</protein>
<comment type="function">
    <text evidence="1 3 4 6">Phytoglobin that reduces nitrite to nitric oxide (NO) under anoxic conditions (e.g. during flooding or in waterlogged soil) and upon root nodulation (By similarity). Required for general plant development and during nodulation, especially for the onset of symbiosis (By similarity). Monitors nitric oxide (NO) levels during early phase of the nitrogen-fixing symbiosis and buffers oxygen in functioning nodules (PubMed:32003030). May not function as an oxygen storage or transport protein (By similarity). Has an unusually high affinity for O(2) through a hexacoordinate heme iron because of a very low dissociation constant (By similarity).</text>
</comment>
<comment type="catalytic activity">
    <reaction evidence="1">
        <text>Fe(III)-heme b-[protein] + nitric oxide + H2O = Fe(II)-heme b-[protein] + nitrite + 2 H(+)</text>
        <dbReference type="Rhea" id="RHEA:77711"/>
        <dbReference type="Rhea" id="RHEA-COMP:18975"/>
        <dbReference type="Rhea" id="RHEA-COMP:18976"/>
        <dbReference type="ChEBI" id="CHEBI:15377"/>
        <dbReference type="ChEBI" id="CHEBI:15378"/>
        <dbReference type="ChEBI" id="CHEBI:16301"/>
        <dbReference type="ChEBI" id="CHEBI:16480"/>
        <dbReference type="ChEBI" id="CHEBI:55376"/>
        <dbReference type="ChEBI" id="CHEBI:60344"/>
    </reaction>
    <physiologicalReaction direction="right-to-left" evidence="1">
        <dbReference type="Rhea" id="RHEA:77713"/>
    </physiologicalReaction>
</comment>
<comment type="cofactor">
    <cofactor evidence="2">
        <name>heme b</name>
        <dbReference type="ChEBI" id="CHEBI:60344"/>
    </cofactor>
    <text evidence="2">Binds 1 heme group per subunit.</text>
</comment>
<comment type="subunit">
    <text evidence="1">Homodimer.</text>
</comment>
<comment type="developmental stage">
    <text evidence="6">During root nodulation, accumulates progressively with highest levels at the onset of nodule senescence.</text>
</comment>
<comment type="induction">
    <text evidence="6">Mainly expressed during symbiosis after root inoculation with Sinorhizobium meliloti, during nodulation (PubMed:32003030). Up-regulated by nitric oxide (NO), particularly during nodulation mediated by Sinorhizobium meliloti inoculation (PubMed:32003030).</text>
</comment>
<comment type="disruption phenotype">
    <text evidence="6">Increased nitric oxide (NO) accumulation in roots during early symbiosis steps as well as in mature nodules (PubMed:32003030). Reduced nodule number (PubMed:32003030).</text>
</comment>
<comment type="similarity">
    <text evidence="8">Belongs to the plant globin family.</text>
</comment>
<reference key="1">
    <citation type="submission" date="2012-05" db="EMBL/GenBank/DDBJ databases">
        <authorList>
            <person name="Krishnakumar V."/>
            <person name="Cheung F."/>
            <person name="Xiao Y."/>
            <person name="Chan A."/>
            <person name="Moskal W.A."/>
            <person name="Town C.D."/>
        </authorList>
    </citation>
    <scope>NUCLEOTIDE SEQUENCE [MRNA]</scope>
</reference>
<reference key="2">
    <citation type="journal article" date="2011" name="Nature">
        <title>The Medicago genome provides insight into the evolution of rhizobial symbioses.</title>
        <authorList>
            <person name="Young N.D."/>
            <person name="Debelle F."/>
            <person name="Oldroyd G.E.D."/>
            <person name="Geurts R."/>
            <person name="Cannon S.B."/>
            <person name="Udvardi M.K."/>
            <person name="Benedito V.A."/>
            <person name="Mayer K.F.X."/>
            <person name="Gouzy J."/>
            <person name="Schoof H."/>
            <person name="Van de Peer Y."/>
            <person name="Proost S."/>
            <person name="Cook D.R."/>
            <person name="Meyers B.C."/>
            <person name="Spannagl M."/>
            <person name="Cheung F."/>
            <person name="De Mita S."/>
            <person name="Krishnakumar V."/>
            <person name="Gundlach H."/>
            <person name="Zhou S."/>
            <person name="Mudge J."/>
            <person name="Bharti A.K."/>
            <person name="Murray J.D."/>
            <person name="Naoumkina M.A."/>
            <person name="Rosen B."/>
            <person name="Silverstein K.A.T."/>
            <person name="Tang H."/>
            <person name="Rombauts S."/>
            <person name="Zhao P.X."/>
            <person name="Zhou P."/>
            <person name="Barbe V."/>
            <person name="Bardou P."/>
            <person name="Bechner M."/>
            <person name="Bellec A."/>
            <person name="Berger A."/>
            <person name="Berges H."/>
            <person name="Bidwell S."/>
            <person name="Bisseling T."/>
            <person name="Choisne N."/>
            <person name="Couloux A."/>
            <person name="Denny R."/>
            <person name="Deshpande S."/>
            <person name="Dai X."/>
            <person name="Doyle J.J."/>
            <person name="Dudez A.-M."/>
            <person name="Farmer A.D."/>
            <person name="Fouteau S."/>
            <person name="Franken C."/>
            <person name="Gibelin C."/>
            <person name="Gish J."/>
            <person name="Goldstein S."/>
            <person name="Gonzalez A.J."/>
            <person name="Green P.J."/>
            <person name="Hallab A."/>
            <person name="Hartog M."/>
            <person name="Hua A."/>
            <person name="Humphray S.J."/>
            <person name="Jeong D.-H."/>
            <person name="Jing Y."/>
            <person name="Jocker A."/>
            <person name="Kenton S.M."/>
            <person name="Kim D.-J."/>
            <person name="Klee K."/>
            <person name="Lai H."/>
            <person name="Lang C."/>
            <person name="Lin S."/>
            <person name="Macmil S.L."/>
            <person name="Magdelenat G."/>
            <person name="Matthews L."/>
            <person name="McCorrison J."/>
            <person name="Monaghan E.L."/>
            <person name="Mun J.-H."/>
            <person name="Najar F.Z."/>
            <person name="Nicholson C."/>
            <person name="Noirot C."/>
            <person name="O'Bleness M."/>
            <person name="Paule C.R."/>
            <person name="Poulain J."/>
            <person name="Prion F."/>
            <person name="Qin B."/>
            <person name="Qu C."/>
            <person name="Retzel E.F."/>
            <person name="Riddle C."/>
            <person name="Sallet E."/>
            <person name="Samain S."/>
            <person name="Samson N."/>
            <person name="Sanders I."/>
            <person name="Saurat O."/>
            <person name="Scarpelli C."/>
            <person name="Schiex T."/>
            <person name="Segurens B."/>
            <person name="Severin A.J."/>
            <person name="Sherrier D.J."/>
            <person name="Shi R."/>
            <person name="Sims S."/>
            <person name="Singer S.R."/>
            <person name="Sinharoy S."/>
            <person name="Sterck L."/>
            <person name="Viollet A."/>
            <person name="Wang B.-B."/>
            <person name="Wang K."/>
            <person name="Wang M."/>
            <person name="Wang X."/>
            <person name="Warfsmann J."/>
            <person name="Weissenbach J."/>
            <person name="White D.D."/>
            <person name="White J.D."/>
            <person name="Wiley G.B."/>
            <person name="Wincker P."/>
            <person name="Xing Y."/>
            <person name="Yang L."/>
            <person name="Yao Z."/>
            <person name="Ying F."/>
            <person name="Zhai J."/>
            <person name="Zhou L."/>
            <person name="Zuber A."/>
            <person name="Denarie J."/>
            <person name="Dixon R.A."/>
            <person name="May G.D."/>
            <person name="Schwartz D.C."/>
            <person name="Rogers J."/>
            <person name="Quetier F."/>
            <person name="Town C.D."/>
            <person name="Roe B.A."/>
        </authorList>
    </citation>
    <scope>NUCLEOTIDE SEQUENCE [LARGE SCALE GENOMIC DNA]</scope>
    <source>
        <strain>cv. Jemalong A17</strain>
    </source>
</reference>
<reference key="3">
    <citation type="journal article" date="2014" name="BMC Genomics">
        <title>An improved genome release (version Mt4.0) for the model legume Medicago truncatula.</title>
        <authorList>
            <person name="Tang H."/>
            <person name="Krishnakumar V."/>
            <person name="Bidwell S."/>
            <person name="Rosen B."/>
            <person name="Chan A."/>
            <person name="Zhou S."/>
            <person name="Gentzbittel L."/>
            <person name="Childs K.L."/>
            <person name="Yandell M."/>
            <person name="Gundlach H."/>
            <person name="Mayer K.F."/>
            <person name="Schwartz D.C."/>
            <person name="Town C.D."/>
        </authorList>
    </citation>
    <scope>GENOME REANNOTATION</scope>
    <source>
        <strain>cv. Jemalong A17</strain>
    </source>
</reference>
<reference key="4">
    <citation type="journal article" date="2018" name="Nat. Plants">
        <title>Whole-genome landscape of Medicago truncatula symbiotic genes.</title>
        <authorList>
            <person name="Pecrix Y."/>
            <person name="Staton S.E."/>
            <person name="Sallet E."/>
            <person name="Lelandais-Briere C."/>
            <person name="Moreau S."/>
            <person name="Carrere S."/>
            <person name="Blein T."/>
            <person name="Jardinaud M.F."/>
            <person name="Latrasse D."/>
            <person name="Zouine M."/>
            <person name="Zahm M."/>
            <person name="Kreplak J."/>
            <person name="Mayjonade B."/>
            <person name="Satge C."/>
            <person name="Perez M."/>
            <person name="Cauet S."/>
            <person name="Marande W."/>
            <person name="Chantry-Darmon C."/>
            <person name="Lopez-Roques C."/>
            <person name="Bouchez O."/>
            <person name="Berard A."/>
            <person name="Debelle F."/>
            <person name="Munos S."/>
            <person name="Bendahmane A."/>
            <person name="Berges H."/>
            <person name="Niebel A."/>
            <person name="Buitink J."/>
            <person name="Frugier F."/>
            <person name="Benhamed M."/>
            <person name="Crespi M."/>
            <person name="Gouzy J."/>
            <person name="Gamas P."/>
        </authorList>
    </citation>
    <scope>NUCLEOTIDE SEQUENCE [LARGE SCALE GENOMIC DNA]</scope>
    <source>
        <strain>cv. Jemalong A17</strain>
        <tissue>Leaf</tissue>
    </source>
</reference>
<reference key="5">
    <citation type="journal article" date="2020" name="New Phytol.">
        <title>Medicago truncatula Phytoglobin 1.1 controls symbiotic nodulation and nitrogen fixation via the regulation of nitric oxide concentration.</title>
        <authorList>
            <person name="Berger A."/>
            <person name="Guinand S."/>
            <person name="Boscari A."/>
            <person name="Puppo A."/>
            <person name="Brouquisse R."/>
        </authorList>
    </citation>
    <scope>FUNCTION</scope>
    <scope>DISRUPTION PHENOTYPE</scope>
    <scope>INDUCTION BY NODULATION AND NITRIC OXIDE</scope>
    <scope>DEVELOPMENTAL STAGE</scope>
    <scope>GENE FAMILY</scope>
    <scope>NOMENCLATURE</scope>
    <source>
        <strain>cv. Jemalong A17</strain>
    </source>
</reference>
<dbReference type="EC" id="1.7.2.-" evidence="1"/>
<dbReference type="EMBL" id="BT142510">
    <property type="protein sequence ID" value="AFK42304.1"/>
    <property type="molecule type" value="mRNA"/>
</dbReference>
<dbReference type="EMBL" id="CM001220">
    <property type="protein sequence ID" value="KEH30375.1"/>
    <property type="molecule type" value="Genomic_DNA"/>
</dbReference>
<dbReference type="EMBL" id="PSQE01000004">
    <property type="protein sequence ID" value="RHN61224.1"/>
    <property type="molecule type" value="Genomic_DNA"/>
</dbReference>
<dbReference type="RefSeq" id="XP_013456344.1">
    <property type="nucleotide sequence ID" value="XM_013600890.1"/>
</dbReference>
<dbReference type="SMR" id="I3SPW2"/>
<dbReference type="STRING" id="3880.I3SPW2"/>
<dbReference type="EnsemblPlants" id="rna23664">
    <property type="protein sequence ID" value="RHN61224.1"/>
    <property type="gene ID" value="gene23664"/>
</dbReference>
<dbReference type="Gramene" id="rna23664">
    <property type="protein sequence ID" value="RHN61224.1"/>
    <property type="gene ID" value="gene23664"/>
</dbReference>
<dbReference type="HOGENOM" id="CLU_003827_11_2_1"/>
<dbReference type="Proteomes" id="UP000002051">
    <property type="component" value="Chromosome 4"/>
</dbReference>
<dbReference type="Proteomes" id="UP000265566">
    <property type="component" value="Chromosome 4"/>
</dbReference>
<dbReference type="ExpressionAtlas" id="I3SPW2">
    <property type="expression patterns" value="differential"/>
</dbReference>
<dbReference type="GO" id="GO:0020037">
    <property type="term" value="F:heme binding"/>
    <property type="evidence" value="ECO:0007669"/>
    <property type="project" value="InterPro"/>
</dbReference>
<dbReference type="GO" id="GO:0046872">
    <property type="term" value="F:metal ion binding"/>
    <property type="evidence" value="ECO:0007669"/>
    <property type="project" value="UniProtKB-KW"/>
</dbReference>
<dbReference type="GO" id="GO:0016491">
    <property type="term" value="F:oxidoreductase activity"/>
    <property type="evidence" value="ECO:0007669"/>
    <property type="project" value="UniProtKB-KW"/>
</dbReference>
<dbReference type="GO" id="GO:0019825">
    <property type="term" value="F:oxygen binding"/>
    <property type="evidence" value="ECO:0007669"/>
    <property type="project" value="InterPro"/>
</dbReference>
<dbReference type="GO" id="GO:0005344">
    <property type="term" value="F:oxygen carrier activity"/>
    <property type="evidence" value="ECO:0007669"/>
    <property type="project" value="UniProtKB-KW"/>
</dbReference>
<dbReference type="GO" id="GO:0009877">
    <property type="term" value="P:nodulation"/>
    <property type="evidence" value="ECO:0000270"/>
    <property type="project" value="UniProtKB"/>
</dbReference>
<dbReference type="GO" id="GO:0071731">
    <property type="term" value="P:response to nitric oxide"/>
    <property type="evidence" value="ECO:0000270"/>
    <property type="project" value="UniProtKB"/>
</dbReference>
<dbReference type="GO" id="GO:0009609">
    <property type="term" value="P:response to symbiotic bacterium"/>
    <property type="evidence" value="ECO:0000270"/>
    <property type="project" value="UniProtKB"/>
</dbReference>
<dbReference type="CDD" id="cd14784">
    <property type="entry name" value="class1_nsHb-like"/>
    <property type="match status" value="1"/>
</dbReference>
<dbReference type="Gene3D" id="1.10.490.10">
    <property type="entry name" value="Globins"/>
    <property type="match status" value="1"/>
</dbReference>
<dbReference type="InterPro" id="IPR000971">
    <property type="entry name" value="Globin"/>
</dbReference>
<dbReference type="InterPro" id="IPR009050">
    <property type="entry name" value="Globin-like_sf"/>
</dbReference>
<dbReference type="InterPro" id="IPR012292">
    <property type="entry name" value="Globin/Proto"/>
</dbReference>
<dbReference type="InterPro" id="IPR001032">
    <property type="entry name" value="Leghaemoglobin-like"/>
</dbReference>
<dbReference type="PANTHER" id="PTHR22924">
    <property type="entry name" value="LEGHEMOGLOBIN-RELATED"/>
    <property type="match status" value="1"/>
</dbReference>
<dbReference type="PANTHER" id="PTHR22924:SF39">
    <property type="entry name" value="NON-SYMBIOTIC HEMOGLOBIN 1"/>
    <property type="match status" value="1"/>
</dbReference>
<dbReference type="Pfam" id="PF00042">
    <property type="entry name" value="Globin"/>
    <property type="match status" value="1"/>
</dbReference>
<dbReference type="PRINTS" id="PR00188">
    <property type="entry name" value="PLANTGLOBIN"/>
</dbReference>
<dbReference type="SUPFAM" id="SSF46458">
    <property type="entry name" value="Globin-like"/>
    <property type="match status" value="1"/>
</dbReference>
<dbReference type="PROSITE" id="PS01033">
    <property type="entry name" value="GLOBIN"/>
    <property type="match status" value="1"/>
</dbReference>
<proteinExistence type="evidence at transcript level"/>
<sequence length="160" mass="17958">MGTLDTKGFTEEQEALVVKSWNAMKKNSAELGLKLFLKIFEIAPSAQKLFSFLKDSKVPLEKNTKLKPHAMSVFLMTCESAVQLRKSGKVTVRESSLKKLGANHFKYGVVDEHFEVTKFALLETIKEAVPEMWSPAMKNAWGEAYDQLVNAIKSEMKPSS</sequence>
<organism>
    <name type="scientific">Medicago truncatula</name>
    <name type="common">Barrel medic</name>
    <name type="synonym">Medicago tribuloides</name>
    <dbReference type="NCBI Taxonomy" id="3880"/>
    <lineage>
        <taxon>Eukaryota</taxon>
        <taxon>Viridiplantae</taxon>
        <taxon>Streptophyta</taxon>
        <taxon>Embryophyta</taxon>
        <taxon>Tracheophyta</taxon>
        <taxon>Spermatophyta</taxon>
        <taxon>Magnoliopsida</taxon>
        <taxon>eudicotyledons</taxon>
        <taxon>Gunneridae</taxon>
        <taxon>Pentapetalae</taxon>
        <taxon>rosids</taxon>
        <taxon>fabids</taxon>
        <taxon>Fabales</taxon>
        <taxon>Fabaceae</taxon>
        <taxon>Papilionoideae</taxon>
        <taxon>50 kb inversion clade</taxon>
        <taxon>NPAAA clade</taxon>
        <taxon>Hologalegina</taxon>
        <taxon>IRL clade</taxon>
        <taxon>Trifolieae</taxon>
        <taxon>Medicago</taxon>
    </lineage>
</organism>